<protein>
    <recommendedName>
        <fullName evidence="7">Silencing boundary-establishment protein FUB1</fullName>
    </recommendedName>
    <alternativeName>
        <fullName evidence="5">Function of boundary protein 1</fullName>
    </alternativeName>
    <alternativeName>
        <fullName evidence="1 6">Proteasome inhibitor PI31-like protein FUB1</fullName>
    </alternativeName>
</protein>
<name>FUB1_YEAST</name>
<accession>P25659</accession>
<accession>D6VR79</accession>
<comment type="function">
    <text evidence="4">Plays a role in the establishment of transcriptional silencing boundaries, preventing the propagation of heterochromatic silencing.</text>
</comment>
<comment type="subunit">
    <text evidence="4">Interacts with the 20S proteasome.</text>
</comment>
<comment type="miscellaneous">
    <text evidence="3">Present with 358 molecules/cell in log phase SD medium.</text>
</comment>
<comment type="similarity">
    <text evidence="6">Belongs to the proteasome inhibitor PI31 family.</text>
</comment>
<keyword id="KW-0002">3D-structure</keyword>
<keyword id="KW-0156">Chromatin regulator</keyword>
<keyword id="KW-1185">Reference proteome</keyword>
<dbReference type="EMBL" id="X59720">
    <property type="protein sequence ID" value="CAA42265.1"/>
    <property type="molecule type" value="Genomic_DNA"/>
</dbReference>
<dbReference type="EMBL" id="BK006937">
    <property type="protein sequence ID" value="DAA07548.1"/>
    <property type="molecule type" value="Genomic_DNA"/>
</dbReference>
<dbReference type="PIR" id="S19518">
    <property type="entry name" value="S19518"/>
</dbReference>
<dbReference type="RefSeq" id="NP_010001.1">
    <property type="nucleotide sequence ID" value="NM_001178785.1"/>
</dbReference>
<dbReference type="PDB" id="7TEO">
    <property type="method" value="EM"/>
    <property type="resolution" value="2.97 A"/>
    <property type="chains" value="a/b=1-250"/>
</dbReference>
<dbReference type="PDBsum" id="7TEO"/>
<dbReference type="EMDB" id="EMD-25848"/>
<dbReference type="SMR" id="P25659"/>
<dbReference type="BioGRID" id="31051">
    <property type="interactions" value="119"/>
</dbReference>
<dbReference type="DIP" id="DIP-2637N"/>
<dbReference type="FunCoup" id="P25659">
    <property type="interactions" value="150"/>
</dbReference>
<dbReference type="IntAct" id="P25659">
    <property type="interactions" value="33"/>
</dbReference>
<dbReference type="MINT" id="P25659"/>
<dbReference type="STRING" id="4932.YCR076C"/>
<dbReference type="iPTMnet" id="P25659"/>
<dbReference type="PaxDb" id="4932-YCR076C"/>
<dbReference type="PeptideAtlas" id="P25659"/>
<dbReference type="EnsemblFungi" id="YCR076C_mRNA">
    <property type="protein sequence ID" value="YCR076C"/>
    <property type="gene ID" value="YCR076C"/>
</dbReference>
<dbReference type="GeneID" id="850439"/>
<dbReference type="KEGG" id="sce:YCR076C"/>
<dbReference type="AGR" id="SGD:S000000672"/>
<dbReference type="SGD" id="S000000672">
    <property type="gene designation" value="FUB1"/>
</dbReference>
<dbReference type="VEuPathDB" id="FungiDB:YCR076C"/>
<dbReference type="eggNOG" id="ENOG502S4RD">
    <property type="taxonomic scope" value="Eukaryota"/>
</dbReference>
<dbReference type="HOGENOM" id="CLU_1125080_0_0_1"/>
<dbReference type="InParanoid" id="P25659"/>
<dbReference type="OMA" id="SHPDWSG"/>
<dbReference type="OrthoDB" id="68090at2759"/>
<dbReference type="BioCyc" id="YEAST:G3O-29375-MONOMER"/>
<dbReference type="BioGRID-ORCS" id="850439">
    <property type="hits" value="4 hits in 10 CRISPR screens"/>
</dbReference>
<dbReference type="PRO" id="PR:P25659"/>
<dbReference type="Proteomes" id="UP000002311">
    <property type="component" value="Chromosome III"/>
</dbReference>
<dbReference type="RNAct" id="P25659">
    <property type="molecule type" value="protein"/>
</dbReference>
<dbReference type="GO" id="GO:0070628">
    <property type="term" value="F:proteasome binding"/>
    <property type="evidence" value="ECO:0000314"/>
    <property type="project" value="SGD"/>
</dbReference>
<dbReference type="GO" id="GO:0006325">
    <property type="term" value="P:chromatin organization"/>
    <property type="evidence" value="ECO:0007669"/>
    <property type="project" value="UniProtKB-KW"/>
</dbReference>
<dbReference type="InterPro" id="IPR013886">
    <property type="entry name" value="PI31_Prot_C"/>
</dbReference>
<dbReference type="Pfam" id="PF08577">
    <property type="entry name" value="PI31_Prot_C"/>
    <property type="match status" value="1"/>
</dbReference>
<gene>
    <name evidence="5" type="primary">FUB1</name>
    <name evidence="8" type="ordered locus">YCR076C</name>
    <name type="ORF">YCR76C</name>
</gene>
<sequence>MIENKVELVAELVLESIGKTEVVSRHTEGTKSCQVSFRIKDSPSEKGSTSFLSELVVIQTLDDNDKYTVVIRHGTSITMACVVGYSDFKLPTELKWPLERESLPVEPDLKPIMTQLKRQTAGSADMPKFDDEYQAQARQNQGTAPLNPYPGLTVTEPSFANPAGGYADGDLYPVGTSHPDWSGGLPNPLGNPSSQGGMIFDPNRRPAPRREDMPPGWMPGSKYDEPFGPGSGGFGGSGSGGFGGSGSGFI</sequence>
<organism>
    <name type="scientific">Saccharomyces cerevisiae (strain ATCC 204508 / S288c)</name>
    <name type="common">Baker's yeast</name>
    <dbReference type="NCBI Taxonomy" id="559292"/>
    <lineage>
        <taxon>Eukaryota</taxon>
        <taxon>Fungi</taxon>
        <taxon>Dikarya</taxon>
        <taxon>Ascomycota</taxon>
        <taxon>Saccharomycotina</taxon>
        <taxon>Saccharomycetes</taxon>
        <taxon>Saccharomycetales</taxon>
        <taxon>Saccharomycetaceae</taxon>
        <taxon>Saccharomyces</taxon>
    </lineage>
</organism>
<proteinExistence type="evidence at protein level"/>
<feature type="chain" id="PRO_0000202574" description="Silencing boundary-establishment protein FUB1">
    <location>
        <begin position="1"/>
        <end position="250"/>
    </location>
</feature>
<feature type="region of interest" description="Disordered" evidence="2">
    <location>
        <begin position="179"/>
        <end position="250"/>
    </location>
</feature>
<feature type="compositionally biased region" description="Basic and acidic residues" evidence="2">
    <location>
        <begin position="202"/>
        <end position="213"/>
    </location>
</feature>
<feature type="compositionally biased region" description="Gly residues" evidence="2">
    <location>
        <begin position="229"/>
        <end position="250"/>
    </location>
</feature>
<feature type="helix" evidence="9">
    <location>
        <begin position="153"/>
        <end position="155"/>
    </location>
</feature>
<feature type="helix" evidence="9">
    <location>
        <begin position="157"/>
        <end position="160"/>
    </location>
</feature>
<feature type="helix" evidence="9">
    <location>
        <begin position="168"/>
        <end position="171"/>
    </location>
</feature>
<feature type="strand" evidence="9">
    <location>
        <begin position="175"/>
        <end position="177"/>
    </location>
</feature>
<feature type="helix" evidence="9">
    <location>
        <begin position="210"/>
        <end position="212"/>
    </location>
</feature>
<reference key="1">
    <citation type="journal article" date="1992" name="Nature">
        <title>The complete DNA sequence of yeast chromosome III.</title>
        <authorList>
            <person name="Oliver S.G."/>
            <person name="van der Aart Q.J.M."/>
            <person name="Agostoni-Carbone M.L."/>
            <person name="Aigle M."/>
            <person name="Alberghina L."/>
            <person name="Alexandraki D."/>
            <person name="Antoine G."/>
            <person name="Anwar R."/>
            <person name="Ballesta J.P.G."/>
            <person name="Benit P."/>
            <person name="Berben G."/>
            <person name="Bergantino E."/>
            <person name="Biteau N."/>
            <person name="Bolle P.-A."/>
            <person name="Bolotin-Fukuhara M."/>
            <person name="Brown A."/>
            <person name="Brown A.J.P."/>
            <person name="Buhler J.-M."/>
            <person name="Carcano C."/>
            <person name="Carignani G."/>
            <person name="Cederberg H."/>
            <person name="Chanet R."/>
            <person name="Contreras R."/>
            <person name="Crouzet M."/>
            <person name="Daignan-Fornier B."/>
            <person name="Defoor E."/>
            <person name="Delgado M.D."/>
            <person name="Demolder J."/>
            <person name="Doira C."/>
            <person name="Dubois E."/>
            <person name="Dujon B."/>
            <person name="Duesterhoeft A."/>
            <person name="Erdmann D."/>
            <person name="Esteban M."/>
            <person name="Fabre F."/>
            <person name="Fairhead C."/>
            <person name="Faye G."/>
            <person name="Feldmann H."/>
            <person name="Fiers W."/>
            <person name="Francingues-Gaillard M.-C."/>
            <person name="Franco L."/>
            <person name="Frontali L."/>
            <person name="Fukuhara H."/>
            <person name="Fuller L.J."/>
            <person name="Galland P."/>
            <person name="Gent M.E."/>
            <person name="Gigot D."/>
            <person name="Gilliquet V."/>
            <person name="Glansdorff N."/>
            <person name="Goffeau A."/>
            <person name="Grenson M."/>
            <person name="Grisanti P."/>
            <person name="Grivell L.A."/>
            <person name="de Haan M."/>
            <person name="Haasemann M."/>
            <person name="Hatat D."/>
            <person name="Hoenicka J."/>
            <person name="Hegemann J.H."/>
            <person name="Herbert C.J."/>
            <person name="Hilger F."/>
            <person name="Hohmann S."/>
            <person name="Hollenberg C.P."/>
            <person name="Huse K."/>
            <person name="Iborra F."/>
            <person name="Indge K.J."/>
            <person name="Isono K."/>
            <person name="Jacq C."/>
            <person name="Jacquet M."/>
            <person name="James C.M."/>
            <person name="Jauniaux J.-C."/>
            <person name="Jia Y."/>
            <person name="Jimenez A."/>
            <person name="Kelly A."/>
            <person name="Kleinhans U."/>
            <person name="Kreisl P."/>
            <person name="Lanfranchi G."/>
            <person name="Lewis C."/>
            <person name="van der Linden C.G."/>
            <person name="Lucchini G."/>
            <person name="Lutzenkirchen K."/>
            <person name="Maat M.J."/>
            <person name="Mallet L."/>
            <person name="Mannhaupt G."/>
            <person name="Martegani E."/>
            <person name="Mathieu A."/>
            <person name="Maurer C.T.C."/>
            <person name="McConnell D."/>
            <person name="McKee R.A."/>
            <person name="Messenguy F."/>
            <person name="Mewes H.-W."/>
            <person name="Molemans F."/>
            <person name="Montague M.A."/>
            <person name="Muzi Falconi M."/>
            <person name="Navas L."/>
            <person name="Newlon C.S."/>
            <person name="Noone D."/>
            <person name="Pallier C."/>
            <person name="Panzeri L."/>
            <person name="Pearson B.M."/>
            <person name="Perea J."/>
            <person name="Philippsen P."/>
            <person name="Pierard A."/>
            <person name="Planta R.J."/>
            <person name="Plevani P."/>
            <person name="Poetsch B."/>
            <person name="Pohl F.M."/>
            <person name="Purnelle B."/>
            <person name="Ramezani Rad M."/>
            <person name="Rasmussen S.W."/>
            <person name="Raynal A."/>
            <person name="Remacha M.A."/>
            <person name="Richterich P."/>
            <person name="Roberts A.B."/>
            <person name="Rodriguez F."/>
            <person name="Sanz E."/>
            <person name="Schaaff-Gerstenschlaeger I."/>
            <person name="Scherens B."/>
            <person name="Schweitzer B."/>
            <person name="Shu Y."/>
            <person name="Skala J."/>
            <person name="Slonimski P.P."/>
            <person name="Sor F."/>
            <person name="Soustelle C."/>
            <person name="Spiegelberg R."/>
            <person name="Stateva L.I."/>
            <person name="Steensma H.Y."/>
            <person name="Steiner S."/>
            <person name="Thierry A."/>
            <person name="Thireos G."/>
            <person name="Tzermia M."/>
            <person name="Urrestarazu L.A."/>
            <person name="Valle G."/>
            <person name="Vetter I."/>
            <person name="van Vliet-Reedijk J.C."/>
            <person name="Voet M."/>
            <person name="Volckaert G."/>
            <person name="Vreken P."/>
            <person name="Wang H."/>
            <person name="Warmington J.R."/>
            <person name="von Wettstein D."/>
            <person name="Wicksteed B.L."/>
            <person name="Wilson C."/>
            <person name="Wurst H."/>
            <person name="Xu G."/>
            <person name="Yoshikawa A."/>
            <person name="Zimmermann F.K."/>
            <person name="Sgouros J.G."/>
        </authorList>
    </citation>
    <scope>NUCLEOTIDE SEQUENCE [LARGE SCALE GENOMIC DNA]</scope>
    <source>
        <strain>ATCC 204508 / S288c</strain>
    </source>
</reference>
<reference key="2">
    <citation type="journal article" date="2014" name="G3 (Bethesda)">
        <title>The reference genome sequence of Saccharomyces cerevisiae: Then and now.</title>
        <authorList>
            <person name="Engel S.R."/>
            <person name="Dietrich F.S."/>
            <person name="Fisk D.G."/>
            <person name="Binkley G."/>
            <person name="Balakrishnan R."/>
            <person name="Costanzo M.C."/>
            <person name="Dwight S.S."/>
            <person name="Hitz B.C."/>
            <person name="Karra K."/>
            <person name="Nash R.S."/>
            <person name="Weng S."/>
            <person name="Wong E.D."/>
            <person name="Lloyd P."/>
            <person name="Skrzypek M.S."/>
            <person name="Miyasato S.R."/>
            <person name="Simison M."/>
            <person name="Cherry J.M."/>
        </authorList>
    </citation>
    <scope>GENOME REANNOTATION</scope>
    <source>
        <strain>ATCC 204508 / S288c</strain>
    </source>
</reference>
<reference key="3">
    <citation type="journal article" date="2003" name="Nature">
        <title>Global analysis of protein expression in yeast.</title>
        <authorList>
            <person name="Ghaemmaghami S."/>
            <person name="Huh W.-K."/>
            <person name="Bower K."/>
            <person name="Howson R.W."/>
            <person name="Belle A."/>
            <person name="Dephoure N."/>
            <person name="O'Shea E.K."/>
            <person name="Weissman J.S."/>
        </authorList>
    </citation>
    <scope>LEVEL OF PROTEIN EXPRESSION [LARGE SCALE ANALYSIS]</scope>
</reference>
<reference key="4">
    <citation type="journal article" date="2011" name="Genes Genet. Syst.">
        <title>Fub1p, a novel protein isolated by boundary screening, binds the proteasome complex.</title>
        <authorList>
            <person name="Hatanaka A."/>
            <person name="Chen B."/>
            <person name="Sun J.Q."/>
            <person name="Mano Y."/>
            <person name="Funakoshi M."/>
            <person name="Kobayashi H."/>
            <person name="Ju Y."/>
            <person name="Mizutani T."/>
            <person name="Shinmyozu K."/>
            <person name="Nakayama J."/>
            <person name="Miyamoto K."/>
            <person name="Uchida H."/>
            <person name="Oki M."/>
        </authorList>
    </citation>
    <scope>FUNCTION</scope>
    <scope>SUBUNIT</scope>
</reference>
<evidence type="ECO:0000250" key="1">
    <source>
        <dbReference type="UniProtKB" id="Q92530"/>
    </source>
</evidence>
<evidence type="ECO:0000256" key="2">
    <source>
        <dbReference type="SAM" id="MobiDB-lite"/>
    </source>
</evidence>
<evidence type="ECO:0000269" key="3">
    <source>
    </source>
</evidence>
<evidence type="ECO:0000269" key="4">
    <source>
    </source>
</evidence>
<evidence type="ECO:0000303" key="5">
    <source>
    </source>
</evidence>
<evidence type="ECO:0000305" key="6"/>
<evidence type="ECO:0000305" key="7">
    <source>
    </source>
</evidence>
<evidence type="ECO:0000312" key="8">
    <source>
        <dbReference type="SGD" id="S000000672"/>
    </source>
</evidence>
<evidence type="ECO:0007829" key="9">
    <source>
        <dbReference type="PDB" id="7TEO"/>
    </source>
</evidence>